<dbReference type="EMBL" id="U43400">
    <property type="protein sequence ID" value="AAC54703.1"/>
    <property type="molecule type" value="Genomic_DNA"/>
</dbReference>
<dbReference type="PIR" id="T41943">
    <property type="entry name" value="T41943"/>
</dbReference>
<dbReference type="SMR" id="P52339"/>
<dbReference type="Proteomes" id="UP000009246">
    <property type="component" value="Segment"/>
</dbReference>
<dbReference type="GO" id="GO:0042025">
    <property type="term" value="C:host cell nucleus"/>
    <property type="evidence" value="ECO:0007669"/>
    <property type="project" value="UniProtKB-SubCell"/>
</dbReference>
<dbReference type="GO" id="GO:0003697">
    <property type="term" value="F:single-stranded DNA binding"/>
    <property type="evidence" value="ECO:0007669"/>
    <property type="project" value="InterPro"/>
</dbReference>
<dbReference type="GO" id="GO:0006260">
    <property type="term" value="P:DNA replication"/>
    <property type="evidence" value="ECO:0007669"/>
    <property type="project" value="UniProtKB-KW"/>
</dbReference>
<dbReference type="Gene3D" id="1.20.190.40">
    <property type="entry name" value="Viral ssDNA binding protein, head domain"/>
    <property type="match status" value="1"/>
</dbReference>
<dbReference type="HAMAP" id="MF_04007">
    <property type="entry name" value="HSV_DNBI"/>
    <property type="match status" value="1"/>
</dbReference>
<dbReference type="InterPro" id="IPR035989">
    <property type="entry name" value="DBP_sf"/>
</dbReference>
<dbReference type="InterPro" id="IPR043031">
    <property type="entry name" value="Viral_ssDBP_head"/>
</dbReference>
<dbReference type="InterPro" id="IPR000635">
    <property type="entry name" value="Viral_ssDNA-bd"/>
</dbReference>
<dbReference type="Pfam" id="PF00747">
    <property type="entry name" value="Viral_DNA_bp"/>
    <property type="match status" value="1"/>
</dbReference>
<dbReference type="SUPFAM" id="SSF118208">
    <property type="entry name" value="Viral ssDNA binding protein"/>
    <property type="match status" value="1"/>
</dbReference>
<organism>
    <name type="scientific">Human herpesvirus 7 (strain JI)</name>
    <name type="common">HHV-7</name>
    <name type="synonym">Human T lymphotropic virus</name>
    <dbReference type="NCBI Taxonomy" id="57278"/>
    <lineage>
        <taxon>Viruses</taxon>
        <taxon>Duplodnaviria</taxon>
        <taxon>Heunggongvirae</taxon>
        <taxon>Peploviricota</taxon>
        <taxon>Herviviricetes</taxon>
        <taxon>Herpesvirales</taxon>
        <taxon>Orthoherpesviridae</taxon>
        <taxon>Betaherpesvirinae</taxon>
        <taxon>Roseolovirus</taxon>
        <taxon>Roseolovirus humanbeta7</taxon>
        <taxon>Human betaherpesvirus 7</taxon>
    </lineage>
</organism>
<reference key="1">
    <citation type="journal article" date="1996" name="J. Virol.">
        <title>Determination and analysis of the complete nucleotide sequence of human herpesvirus.</title>
        <authorList>
            <person name="Nicholas J."/>
        </authorList>
    </citation>
    <scope>NUCLEOTIDE SEQUENCE [LARGE SCALE GENOMIC DNA]</scope>
</reference>
<accession>P52339</accession>
<keyword id="KW-0235">DNA replication</keyword>
<keyword id="KW-0238">DNA-binding</keyword>
<keyword id="KW-1048">Host nucleus</keyword>
<keyword id="KW-1185">Reference proteome</keyword>
<organismHost>
    <name type="scientific">Homo sapiens</name>
    <name type="common">Human</name>
    <dbReference type="NCBI Taxonomy" id="9606"/>
</organismHost>
<protein>
    <recommendedName>
        <fullName evidence="1">Major DNA-binding protein</fullName>
    </recommendedName>
</protein>
<name>DNBI_HHV7J</name>
<proteinExistence type="inferred from homology"/>
<sequence>MADDNETVVSAPICTAAWLYILPKEQKLIEILTTLSLMEKRKSVVISPLLLNLTVENDFFPTVKTPIINYGGTVITKITSFMPVCFFFHGTDVFLKEAEDHGNLDKLCKQTREKFNLQEFVVNGNRKSVDIGKICESVGRNADDVLCHIVVGNGFKELLFAGLLIPCVEEQIQVQVGECLAIKIPLYSATLFESEETLCIDTCTEFIQENGFYAPQISEVLFYLIFTSWGMTLRFNNTLELIKAGLKQFIQDTEQTVKLAPNKTYHGIPGQKLSPIEKDHLMLVDAVITELTFSYTAEYLDSIYENNQIMNFSEWPIIKSAETHEEKIVELKKLRLHLSSHVAALVFAANSILYSNKLAYISNTKQAFNSAITQETLLRSIQFCNSLSSLNEDFYNDARKLIKCNSSPCKEDKFSAFHLAYACATCPQILSHIIWNLNRMSIYNTNCGNSEIYNHIVNCSSNLCEFCEGKCCHSCIGTALIRINSRLPQISKTTKKEPIVMTMFSRFYADVDVLGSFGKKGVNESKDPMKEAQTTPSLDRFKFLGMIHDYCKKNNLIDAITGEDNLNFKSQNDFVNMINDLIQCIEEAVSKCISEMRKTQTSREQIENCLQSFNIDTTPLSLAFSPFFVFTYYKVILIVLQNLALIIGTGYVVDRPCTGNLISKWLMQQYQSLYGAFYNSHFKKGFLNMKTVKIASNVDMEQYIDFNLFKSGKYAKTSIQAKLCRLSMQCLKDFRVKNRPFNKPNKNTQNNPFFKKVKQKKNPLSGCLSFLLFKYHERLFPNLKISCLEFWQRILLNNMPKTIDIGNVEDMRSFIKFTFRVTNSYDEIDLLDIQPECLLSFIEYYFHNKLLSVLGYRDYLTSLHALTSKLVPQNPMLFPVFLKEHPTFSSVQEYVMHVKKLVGNGLKEPMTASLTKEPNFGSIFTGRSIITFGLMIEKFVSVASRDYFHFGQLGWIAGSGVDRNLNPPSSGLQDFRFMRQKFVIATKLCDIIVKKVKREAIVYDVEVIRGKVLNIIESLSNSVNPELLILAEVMKDRDSKPTMDDMLFYVDGREPLAKSVMNKIQHLTDLNVHDFSLSTLLSVFEEQVEDSAAIYDFSELLVEGNEQGFGILKCEETEHENEEPSLKKARL</sequence>
<evidence type="ECO:0000255" key="1">
    <source>
        <dbReference type="HAMAP-Rule" id="MF_04007"/>
    </source>
</evidence>
<comment type="function">
    <text>Single-stranded DNA-binding protein required for DNA replication.</text>
</comment>
<comment type="function">
    <text evidence="1">Plays several crucial roles in viral infection. Participates in the opening of the viral DNA origin to initiate replication by interacting with the origin-binding protein. May disrupt loops, hairpins and other secondary structures present on ssDNA to reduce and eliminate pausing of viral DNA polymerase at specific sites during elongation. Promotes viral DNA recombination by performing strand-transfer, characterized by the ability to transfer a DNA strand from a linear duplex to a complementary single-stranded DNA circle. Can also catalyze the renaturation of complementary single strands. Additionally, reorganizes the host cell nucleus, leading to the formation of prereplicative sites and replication compartments. This process is driven by the protein which can form double-helical filaments in the absence of DNA.</text>
</comment>
<comment type="subunit">
    <text evidence="1">Homooligomers. Forms double-helical filaments necessary for the formation of replication compartments within the host nucleus. Interacts with the origin-binding protein. Interacts with the helicase primase complex; this interaction stimulates primer synthesis activity of the helicase-primase complex. Interacts with the DNA polymerase. Interacts with the alkaline exonuclease; this interaction increases its nuclease processivity.</text>
</comment>
<comment type="subcellular location">
    <subcellularLocation>
        <location evidence="1">Host nucleus</location>
    </subcellularLocation>
    <text evidence="1">In the absence of DNA replication, found in the nuclear framework-associated structures (prereplicative sites). As viral DNA replication proceeds, it migrates to globular intranuclear structures (replication compartments).</text>
</comment>
<comment type="similarity">
    <text evidence="1">Belongs to the herpesviridae major DNA-binding protein family.</text>
</comment>
<feature type="chain" id="PRO_0000115754" description="Major DNA-binding protein">
    <location>
        <begin position="1"/>
        <end position="1131"/>
    </location>
</feature>
<feature type="region of interest" description="Required for nuclear localization" evidence="1">
    <location>
        <begin position="1112"/>
        <end position="1131"/>
    </location>
</feature>
<feature type="short sequence motif" description="Required for filament formation" evidence="1">
    <location>
        <begin position="790"/>
        <end position="791"/>
    </location>
</feature>
<gene>
    <name evidence="1" type="primary">DBP</name>
    <name type="synonym">U41</name>
</gene>